<reference key="1">
    <citation type="journal article" date="2005" name="Nature">
        <title>DNA sequence and analysis of human chromosome 18.</title>
        <authorList>
            <person name="Nusbaum C."/>
            <person name="Zody M.C."/>
            <person name="Borowsky M.L."/>
            <person name="Kamal M."/>
            <person name="Kodira C.D."/>
            <person name="Taylor T.D."/>
            <person name="Whittaker C.A."/>
            <person name="Chang J.L."/>
            <person name="Cuomo C.A."/>
            <person name="Dewar K."/>
            <person name="FitzGerald M.G."/>
            <person name="Yang X."/>
            <person name="Abouelleil A."/>
            <person name="Allen N.R."/>
            <person name="Anderson S."/>
            <person name="Bloom T."/>
            <person name="Bugalter B."/>
            <person name="Butler J."/>
            <person name="Cook A."/>
            <person name="DeCaprio D."/>
            <person name="Engels R."/>
            <person name="Garber M."/>
            <person name="Gnirke A."/>
            <person name="Hafez N."/>
            <person name="Hall J.L."/>
            <person name="Norman C.H."/>
            <person name="Itoh T."/>
            <person name="Jaffe D.B."/>
            <person name="Kuroki Y."/>
            <person name="Lehoczky J."/>
            <person name="Lui A."/>
            <person name="Macdonald P."/>
            <person name="Mauceli E."/>
            <person name="Mikkelsen T.S."/>
            <person name="Naylor J.W."/>
            <person name="Nicol R."/>
            <person name="Nguyen C."/>
            <person name="Noguchi H."/>
            <person name="O'Leary S.B."/>
            <person name="Piqani B."/>
            <person name="Smith C.L."/>
            <person name="Talamas J.A."/>
            <person name="Topham K."/>
            <person name="Totoki Y."/>
            <person name="Toyoda A."/>
            <person name="Wain H.M."/>
            <person name="Young S.K."/>
            <person name="Zeng Q."/>
            <person name="Zimmer A.R."/>
            <person name="Fujiyama A."/>
            <person name="Hattori M."/>
            <person name="Birren B.W."/>
            <person name="Sakaki Y."/>
            <person name="Lander E.S."/>
        </authorList>
    </citation>
    <scope>NUCLEOTIDE SEQUENCE [LARGE SCALE GENOMIC DNA]</scope>
</reference>
<reference key="2">
    <citation type="journal article" date="2004" name="Genome Res.">
        <title>The status, quality, and expansion of the NIH full-length cDNA project: the Mammalian Gene Collection (MGC).</title>
        <authorList>
            <consortium name="The MGC Project Team"/>
        </authorList>
    </citation>
    <scope>NUCLEOTIDE SEQUENCE [LARGE SCALE MRNA] OF 1-375</scope>
    <scope>VARIANTS ALA-3 AND ASP-86</scope>
</reference>
<reference key="3">
    <citation type="journal article" date="2002" name="Proc. Natl. Acad. Sci. U.S.A.">
        <title>POTE, a highly homologous gene family located on numerous chromosomes and expressed in prostate, ovary, testis, placenta, and prostate cancer.</title>
        <authorList>
            <person name="Bera T.K."/>
            <person name="Zimonjic D.B."/>
            <person name="Popescu N.C."/>
            <person name="Sathyanarayana B.K."/>
            <person name="Kumar V."/>
            <person name="Lee B."/>
            <person name="Pastan I."/>
        </authorList>
    </citation>
    <scope>TISSUE SPECIFICITY</scope>
</reference>
<reference key="4">
    <citation type="journal article" date="2003" name="Proc. Natl. Acad. Sci. U.S.A.">
        <authorList>
            <person name="Bera T.K."/>
            <person name="Zimonjic D.B."/>
            <person name="Popescu N.C."/>
            <person name="Sathyanarayana B.K."/>
            <person name="Kumar V."/>
            <person name="Lee B."/>
            <person name="Pastan I."/>
        </authorList>
    </citation>
    <scope>ERRATUM OF PUBMED:12475935</scope>
</reference>
<evidence type="ECO:0000255" key="1"/>
<evidence type="ECO:0000256" key="2">
    <source>
        <dbReference type="SAM" id="MobiDB-lite"/>
    </source>
</evidence>
<evidence type="ECO:0000269" key="3">
    <source>
    </source>
</evidence>
<evidence type="ECO:0000269" key="4">
    <source>
    </source>
</evidence>
<evidence type="ECO:0000305" key="5"/>
<dbReference type="EMBL" id="AP006261">
    <property type="status" value="NOT_ANNOTATED_CDS"/>
    <property type="molecule type" value="Genomic_DNA"/>
</dbReference>
<dbReference type="EMBL" id="BC140940">
    <property type="protein sequence ID" value="AAI40941.1"/>
    <property type="status" value="ALT_SEQ"/>
    <property type="molecule type" value="mRNA"/>
</dbReference>
<dbReference type="CCDS" id="CCDS45835.1"/>
<dbReference type="RefSeq" id="NP_001131143.1">
    <property type="nucleotide sequence ID" value="NM_001137671.2"/>
</dbReference>
<dbReference type="SMR" id="B2RU33"/>
<dbReference type="BioGRID" id="132700">
    <property type="interactions" value="12"/>
</dbReference>
<dbReference type="FunCoup" id="B2RU33">
    <property type="interactions" value="25"/>
</dbReference>
<dbReference type="IntAct" id="B2RU33">
    <property type="interactions" value="12"/>
</dbReference>
<dbReference type="STRING" id="9606.ENSP00000351856"/>
<dbReference type="iPTMnet" id="B2RU33"/>
<dbReference type="PhosphoSitePlus" id="B2RU33"/>
<dbReference type="SwissPalm" id="B2RU33"/>
<dbReference type="BioMuta" id="POTEC"/>
<dbReference type="jPOST" id="B2RU33"/>
<dbReference type="MassIVE" id="B2RU33"/>
<dbReference type="PaxDb" id="9606-ENSP00000351856"/>
<dbReference type="PeptideAtlas" id="B2RU33"/>
<dbReference type="ProteomicsDB" id="3455"/>
<dbReference type="Antibodypedia" id="81840">
    <property type="antibodies" value="2 antibodies from 2 providers"/>
</dbReference>
<dbReference type="DNASU" id="388468"/>
<dbReference type="Ensembl" id="ENST00000358970.10">
    <property type="protein sequence ID" value="ENSP00000351856.5"/>
    <property type="gene ID" value="ENSG00000183206.18"/>
</dbReference>
<dbReference type="GeneID" id="388468"/>
<dbReference type="KEGG" id="hsa:388468"/>
<dbReference type="MANE-Select" id="ENST00000358970.10">
    <property type="protein sequence ID" value="ENSP00000351856.5"/>
    <property type="RefSeq nucleotide sequence ID" value="NM_001137671.2"/>
    <property type="RefSeq protein sequence ID" value="NP_001131143.1"/>
</dbReference>
<dbReference type="UCSC" id="uc010dln.4">
    <property type="organism name" value="human"/>
</dbReference>
<dbReference type="AGR" id="HGNC:33894"/>
<dbReference type="CTD" id="388468"/>
<dbReference type="GeneCards" id="POTEC"/>
<dbReference type="HGNC" id="HGNC:33894">
    <property type="gene designation" value="POTEC"/>
</dbReference>
<dbReference type="HPA" id="ENSG00000183206">
    <property type="expression patterns" value="Tissue enriched (testis)"/>
</dbReference>
<dbReference type="neXtProt" id="NX_B2RU33"/>
<dbReference type="OpenTargets" id="ENSG00000183206"/>
<dbReference type="PharmGKB" id="PA164724729"/>
<dbReference type="VEuPathDB" id="HostDB:ENSG00000183206"/>
<dbReference type="eggNOG" id="KOG0676">
    <property type="taxonomic scope" value="Eukaryota"/>
</dbReference>
<dbReference type="GeneTree" id="ENSGT00940000163068"/>
<dbReference type="HOGENOM" id="CLU_000134_9_2_1"/>
<dbReference type="InParanoid" id="B2RU33"/>
<dbReference type="OrthoDB" id="9537854at2759"/>
<dbReference type="PAN-GO" id="B2RU33">
    <property type="GO annotations" value="0 GO annotations based on evolutionary models"/>
</dbReference>
<dbReference type="PhylomeDB" id="B2RU33"/>
<dbReference type="TreeFam" id="TF337879"/>
<dbReference type="PathwayCommons" id="B2RU33"/>
<dbReference type="SignaLink" id="B2RU33"/>
<dbReference type="BioGRID-ORCS" id="388468">
    <property type="hits" value="32 hits in 1072 CRISPR screens"/>
</dbReference>
<dbReference type="ChiTaRS" id="POTEC">
    <property type="organism name" value="human"/>
</dbReference>
<dbReference type="GenomeRNAi" id="388468"/>
<dbReference type="Pharos" id="B2RU33">
    <property type="development level" value="Tdark"/>
</dbReference>
<dbReference type="PRO" id="PR:B2RU33"/>
<dbReference type="Proteomes" id="UP000005640">
    <property type="component" value="Chromosome 18"/>
</dbReference>
<dbReference type="RNAct" id="B2RU33">
    <property type="molecule type" value="protein"/>
</dbReference>
<dbReference type="Bgee" id="ENSG00000183206">
    <property type="expression patterns" value="Expressed in male germ line stem cell (sensu Vertebrata) in testis and 39 other cell types or tissues"/>
</dbReference>
<dbReference type="ExpressionAtlas" id="B2RU33">
    <property type="expression patterns" value="baseline and differential"/>
</dbReference>
<dbReference type="Gene3D" id="1.25.40.20">
    <property type="entry name" value="Ankyrin repeat-containing domain"/>
    <property type="match status" value="1"/>
</dbReference>
<dbReference type="InterPro" id="IPR050657">
    <property type="entry name" value="Ankyrin_repeat_domain"/>
</dbReference>
<dbReference type="InterPro" id="IPR002110">
    <property type="entry name" value="Ankyrin_rpt"/>
</dbReference>
<dbReference type="InterPro" id="IPR036770">
    <property type="entry name" value="Ankyrin_rpt-contain_sf"/>
</dbReference>
<dbReference type="InterPro" id="IPR039497">
    <property type="entry name" value="CC144C-like_CC_dom"/>
</dbReference>
<dbReference type="PANTHER" id="PTHR24147">
    <property type="entry name" value="ANKYRIN REPEAT DOMAIN 36-RELATED"/>
    <property type="match status" value="1"/>
</dbReference>
<dbReference type="PANTHER" id="PTHR24147:SF66">
    <property type="entry name" value="POTE ANKYRIN DOMAIN FAMILY MEMBER D"/>
    <property type="match status" value="1"/>
</dbReference>
<dbReference type="Pfam" id="PF12796">
    <property type="entry name" value="Ank_2"/>
    <property type="match status" value="2"/>
</dbReference>
<dbReference type="Pfam" id="PF14915">
    <property type="entry name" value="CCDC144C"/>
    <property type="match status" value="1"/>
</dbReference>
<dbReference type="PRINTS" id="PR01415">
    <property type="entry name" value="ANKYRIN"/>
</dbReference>
<dbReference type="SMART" id="SM00248">
    <property type="entry name" value="ANK"/>
    <property type="match status" value="6"/>
</dbReference>
<dbReference type="SUPFAM" id="SSF48403">
    <property type="entry name" value="Ankyrin repeat"/>
    <property type="match status" value="1"/>
</dbReference>
<dbReference type="PROSITE" id="PS50297">
    <property type="entry name" value="ANK_REP_REGION"/>
    <property type="match status" value="1"/>
</dbReference>
<dbReference type="PROSITE" id="PS50088">
    <property type="entry name" value="ANK_REPEAT"/>
    <property type="match status" value="5"/>
</dbReference>
<sequence length="542" mass="61188">MVTEVCSMPAASAVKKPFDLRSKMGKWFHHRFPCCKGSGKSNMGTSGDHDDSFMKMLRSKMGKCCHHCFPCCRGSGTSNVGTSGDHDNSFMKTLRSKMGKWCCHCFPCCRGSGKSNVGAWGDYDDSAFMEPRYHVRREDLDKLHRAAWWGKVPRKDLIVMLRDTDMNKRDKQKRTALHLASANGNSEVVQLLLDRRCQLNVLDNKKRTALIKAVQCQEDECVLMLLEHGADQNIPDEYGNTTLHYAVHNEDKLMAKALLLYGADIESKNKCGLTPLLLGVHEQKQQVVKFLIKKKANLNALDRYGRTALILAVCCGSASIVNLLLEQNVDVSSQDLSGQTAREYAVSSHHHVICELLSDYKEKQMLKISSENSNPEQDLKLTSEEESQRLKVSENSQPEKMSQEPEINKDCDREVEEEIKKHGSNPVGLPENLTNGASAGNGDDGLIPQRRSRKPENQQFPDTENEEYHSDEQNDTRKQLSEEQNTGISQDEILTNKQKQIEVAEKKMNSELSLSHKKEEDLLRENSMLQEEIAMLISGDWN</sequence>
<gene>
    <name type="primary">POTEC</name>
    <name type="synonym">A26B2</name>
    <name type="synonym">POTE18</name>
</gene>
<name>POTEC_HUMAN</name>
<protein>
    <recommendedName>
        <fullName>POTE ankyrin domain family member C</fullName>
    </recommendedName>
    <alternativeName>
        <fullName>ANKRD26-like family B member 2</fullName>
    </alternativeName>
    <alternativeName>
        <fullName>Prostate, ovary, testis-expressed protein on chromosome 18</fullName>
        <shortName>POTE-18</shortName>
    </alternativeName>
</protein>
<proteinExistence type="evidence at transcript level"/>
<comment type="tissue specificity">
    <text evidence="3">Expressed in prostate and testis.</text>
</comment>
<comment type="similarity">
    <text evidence="5">Belongs to the POTE family.</text>
</comment>
<comment type="sequence caution" evidence="5">
    <conflict type="miscellaneous discrepancy">
        <sequence resource="EMBL-CDS" id="AAI40941"/>
    </conflict>
    <text>Probable cloning artifact.</text>
</comment>
<accession>B2RU33</accession>
<organism>
    <name type="scientific">Homo sapiens</name>
    <name type="common">Human</name>
    <dbReference type="NCBI Taxonomy" id="9606"/>
    <lineage>
        <taxon>Eukaryota</taxon>
        <taxon>Metazoa</taxon>
        <taxon>Chordata</taxon>
        <taxon>Craniata</taxon>
        <taxon>Vertebrata</taxon>
        <taxon>Euteleostomi</taxon>
        <taxon>Mammalia</taxon>
        <taxon>Eutheria</taxon>
        <taxon>Euarchontoglires</taxon>
        <taxon>Primates</taxon>
        <taxon>Haplorrhini</taxon>
        <taxon>Catarrhini</taxon>
        <taxon>Hominidae</taxon>
        <taxon>Homo</taxon>
    </lineage>
</organism>
<keyword id="KW-0040">ANK repeat</keyword>
<keyword id="KW-0175">Coiled coil</keyword>
<keyword id="KW-1185">Reference proteome</keyword>
<keyword id="KW-0677">Repeat</keyword>
<feature type="chain" id="PRO_0000345419" description="POTE ankyrin domain family member C">
    <location>
        <begin position="1"/>
        <end position="542"/>
    </location>
</feature>
<feature type="repeat" description="ANK 1">
    <location>
        <begin position="138"/>
        <end position="171"/>
    </location>
</feature>
<feature type="repeat" description="ANK 2">
    <location>
        <begin position="172"/>
        <end position="201"/>
    </location>
</feature>
<feature type="repeat" description="ANK 3">
    <location>
        <begin position="205"/>
        <end position="234"/>
    </location>
</feature>
<feature type="repeat" description="ANK 4">
    <location>
        <begin position="238"/>
        <end position="267"/>
    </location>
</feature>
<feature type="repeat" description="ANK 5">
    <location>
        <begin position="271"/>
        <end position="300"/>
    </location>
</feature>
<feature type="repeat" description="ANK 6">
    <location>
        <begin position="304"/>
        <end position="333"/>
    </location>
</feature>
<feature type="repeat" description="ANK 7">
    <location>
        <begin position="337"/>
        <end position="373"/>
    </location>
</feature>
<feature type="region of interest" description="Disordered" evidence="2">
    <location>
        <begin position="369"/>
        <end position="494"/>
    </location>
</feature>
<feature type="coiled-coil region" evidence="1">
    <location>
        <begin position="489"/>
        <end position="538"/>
    </location>
</feature>
<feature type="compositionally biased region" description="Basic and acidic residues" evidence="2">
    <location>
        <begin position="377"/>
        <end position="392"/>
    </location>
</feature>
<feature type="compositionally biased region" description="Basic and acidic residues" evidence="2">
    <location>
        <begin position="401"/>
        <end position="412"/>
    </location>
</feature>
<feature type="compositionally biased region" description="Basic and acidic residues" evidence="2">
    <location>
        <begin position="466"/>
        <end position="481"/>
    </location>
</feature>
<feature type="compositionally biased region" description="Polar residues" evidence="2">
    <location>
        <begin position="482"/>
        <end position="494"/>
    </location>
</feature>
<feature type="sequence variant" id="VAR_045825" description="In dbSNP:rs28535987." evidence="4">
    <original>T</original>
    <variation>A</variation>
    <location>
        <position position="3"/>
    </location>
</feature>
<feature type="sequence variant" id="VAR_045826" description="In dbSNP:rs45488295.">
    <original>A</original>
    <variation>T</variation>
    <location>
        <position position="10"/>
    </location>
</feature>
<feature type="sequence variant" id="VAR_045827" description="In dbSNP:rs45561536.">
    <original>A</original>
    <variation>T</variation>
    <location>
        <position position="13"/>
    </location>
</feature>
<feature type="sequence variant" id="VAR_045828" description="In dbSNP:rs45626231.">
    <original>F</original>
    <variation>C</variation>
    <location>
        <position position="28"/>
    </location>
</feature>
<feature type="sequence variant" id="VAR_045829" description="In dbSNP:rs9807633.">
    <original>H</original>
    <variation>P</variation>
    <location>
        <position position="30"/>
    </location>
</feature>
<feature type="sequence variant" id="VAR_045830" description="In dbSNP:rs45570841.">
    <original>K</original>
    <variation>R</variation>
    <location>
        <position position="36"/>
    </location>
</feature>
<feature type="sequence variant" id="VAR_045831" description="In dbSNP:rs9807555.">
    <original>H</original>
    <variation>R</variation>
    <location>
        <position position="66"/>
    </location>
</feature>
<feature type="sequence variant" id="VAR_045832" description="In dbSNP:rs45554841.">
    <original>C</original>
    <variation>Y</variation>
    <location>
        <position position="72"/>
    </location>
</feature>
<feature type="sequence variant" id="VAR_045833" description="In dbSNP:rs45469098." evidence="4">
    <original>H</original>
    <variation>D</variation>
    <location>
        <position position="86"/>
    </location>
</feature>
<feature type="sequence variant" id="VAR_045834" description="In dbSNP:rs12454500.">
    <original>M</original>
    <variation>I</variation>
    <location>
        <position position="166"/>
    </location>
</feature>
<feature type="sequence variant" id="VAR_045835" description="In dbSNP:rs7505568.">
    <original>C</original>
    <variation>R</variation>
    <location>
        <position position="221"/>
    </location>
</feature>
<feature type="sequence conflict" description="In Ref. 2; AAI40941." evidence="5" ref="2">
    <original>S</original>
    <variation>C</variation>
    <location>
        <position position="337"/>
    </location>
</feature>